<reference key="1">
    <citation type="journal article" date="1999" name="Nature">
        <title>Sequence and analysis of chromosome 2 of the plant Arabidopsis thaliana.</title>
        <authorList>
            <person name="Lin X."/>
            <person name="Kaul S."/>
            <person name="Rounsley S.D."/>
            <person name="Shea T.P."/>
            <person name="Benito M.-I."/>
            <person name="Town C.D."/>
            <person name="Fujii C.Y."/>
            <person name="Mason T.M."/>
            <person name="Bowman C.L."/>
            <person name="Barnstead M.E."/>
            <person name="Feldblyum T.V."/>
            <person name="Buell C.R."/>
            <person name="Ketchum K.A."/>
            <person name="Lee J.J."/>
            <person name="Ronning C.M."/>
            <person name="Koo H.L."/>
            <person name="Moffat K.S."/>
            <person name="Cronin L.A."/>
            <person name="Shen M."/>
            <person name="Pai G."/>
            <person name="Van Aken S."/>
            <person name="Umayam L."/>
            <person name="Tallon L.J."/>
            <person name="Gill J.E."/>
            <person name="Adams M.D."/>
            <person name="Carrera A.J."/>
            <person name="Creasy T.H."/>
            <person name="Goodman H.M."/>
            <person name="Somerville C.R."/>
            <person name="Copenhaver G.P."/>
            <person name="Preuss D."/>
            <person name="Nierman W.C."/>
            <person name="White O."/>
            <person name="Eisen J.A."/>
            <person name="Salzberg S.L."/>
            <person name="Fraser C.M."/>
            <person name="Venter J.C."/>
        </authorList>
    </citation>
    <scope>NUCLEOTIDE SEQUENCE [LARGE SCALE GENOMIC DNA]</scope>
    <source>
        <strain>cv. Columbia</strain>
    </source>
</reference>
<reference key="2">
    <citation type="journal article" date="2017" name="Plant J.">
        <title>Araport11: a complete reannotation of the Arabidopsis thaliana reference genome.</title>
        <authorList>
            <person name="Cheng C.Y."/>
            <person name="Krishnakumar V."/>
            <person name="Chan A.P."/>
            <person name="Thibaud-Nissen F."/>
            <person name="Schobel S."/>
            <person name="Town C.D."/>
        </authorList>
    </citation>
    <scope>GENOME REANNOTATION</scope>
    <source>
        <strain>cv. Columbia</strain>
    </source>
</reference>
<reference key="3">
    <citation type="journal article" date="2003" name="Science">
        <title>Empirical analysis of transcriptional activity in the Arabidopsis genome.</title>
        <authorList>
            <person name="Yamada K."/>
            <person name="Lim J."/>
            <person name="Dale J.M."/>
            <person name="Chen H."/>
            <person name="Shinn P."/>
            <person name="Palm C.J."/>
            <person name="Southwick A.M."/>
            <person name="Wu H.C."/>
            <person name="Kim C.J."/>
            <person name="Nguyen M."/>
            <person name="Pham P.K."/>
            <person name="Cheuk R.F."/>
            <person name="Karlin-Newmann G."/>
            <person name="Liu S.X."/>
            <person name="Lam B."/>
            <person name="Sakano H."/>
            <person name="Wu T."/>
            <person name="Yu G."/>
            <person name="Miranda M."/>
            <person name="Quach H.L."/>
            <person name="Tripp M."/>
            <person name="Chang C.H."/>
            <person name="Lee J.M."/>
            <person name="Toriumi M.J."/>
            <person name="Chan M.M."/>
            <person name="Tang C.C."/>
            <person name="Onodera C.S."/>
            <person name="Deng J.M."/>
            <person name="Akiyama K."/>
            <person name="Ansari Y."/>
            <person name="Arakawa T."/>
            <person name="Banh J."/>
            <person name="Banno F."/>
            <person name="Bowser L."/>
            <person name="Brooks S.Y."/>
            <person name="Carninci P."/>
            <person name="Chao Q."/>
            <person name="Choy N."/>
            <person name="Enju A."/>
            <person name="Goldsmith A.D."/>
            <person name="Gurjal M."/>
            <person name="Hansen N.F."/>
            <person name="Hayashizaki Y."/>
            <person name="Johnson-Hopson C."/>
            <person name="Hsuan V.W."/>
            <person name="Iida K."/>
            <person name="Karnes M."/>
            <person name="Khan S."/>
            <person name="Koesema E."/>
            <person name="Ishida J."/>
            <person name="Jiang P.X."/>
            <person name="Jones T."/>
            <person name="Kawai J."/>
            <person name="Kamiya A."/>
            <person name="Meyers C."/>
            <person name="Nakajima M."/>
            <person name="Narusaka M."/>
            <person name="Seki M."/>
            <person name="Sakurai T."/>
            <person name="Satou M."/>
            <person name="Tamse R."/>
            <person name="Vaysberg M."/>
            <person name="Wallender E.K."/>
            <person name="Wong C."/>
            <person name="Yamamura Y."/>
            <person name="Yuan S."/>
            <person name="Shinozaki K."/>
            <person name="Davis R.W."/>
            <person name="Theologis A."/>
            <person name="Ecker J.R."/>
        </authorList>
    </citation>
    <scope>NUCLEOTIDE SEQUENCE [LARGE SCALE MRNA]</scope>
    <source>
        <strain>cv. Columbia</strain>
    </source>
</reference>
<reference key="4">
    <citation type="submission" date="2006-07" db="EMBL/GenBank/DDBJ databases">
        <title>Large-scale analysis of RIKEN Arabidopsis full-length (RAFL) cDNAs.</title>
        <authorList>
            <person name="Totoki Y."/>
            <person name="Seki M."/>
            <person name="Ishida J."/>
            <person name="Nakajima M."/>
            <person name="Enju A."/>
            <person name="Kamiya A."/>
            <person name="Narusaka M."/>
            <person name="Shin-i T."/>
            <person name="Nakagawa M."/>
            <person name="Sakamoto N."/>
            <person name="Oishi K."/>
            <person name="Kohara Y."/>
            <person name="Kobayashi M."/>
            <person name="Toyoda A."/>
            <person name="Sakaki Y."/>
            <person name="Sakurai T."/>
            <person name="Iida K."/>
            <person name="Akiyama K."/>
            <person name="Satou M."/>
            <person name="Toyoda T."/>
            <person name="Konagaya A."/>
            <person name="Carninci P."/>
            <person name="Kawai J."/>
            <person name="Hayashizaki Y."/>
            <person name="Shinozaki K."/>
        </authorList>
    </citation>
    <scope>NUCLEOTIDE SEQUENCE [LARGE SCALE MRNA]</scope>
    <source>
        <strain>cv. Columbia</strain>
    </source>
</reference>
<reference key="5">
    <citation type="submission" date="2002-03" db="EMBL/GenBank/DDBJ databases">
        <title>Full-length cDNA from Arabidopsis thaliana.</title>
        <authorList>
            <person name="Brover V.V."/>
            <person name="Troukhan M.E."/>
            <person name="Alexandrov N.A."/>
            <person name="Lu Y.-P."/>
            <person name="Flavell R.B."/>
            <person name="Feldmann K.A."/>
        </authorList>
    </citation>
    <scope>NUCLEOTIDE SEQUENCE [LARGE SCALE MRNA]</scope>
</reference>
<reference key="6">
    <citation type="journal article" date="1997" name="Plant Physiol.">
        <title>Jasmonic acid-dependent and -independent signaling pathways control wound-induced gene activation in Arabidopsis thaliana.</title>
        <authorList>
            <person name="Titarenko E."/>
            <person name="Rojo E."/>
            <person name="Leon J."/>
            <person name="Sanchez-Serrano J.J."/>
        </authorList>
    </citation>
    <scope>TISSUE SPECIFICITY</scope>
    <scope>INDUCTION</scope>
</reference>
<reference key="7">
    <citation type="journal article" date="2008" name="Planta">
        <title>The role of JAR1 in Jasmonoyl-L: -isoleucine production during Arabidopsis wound response.</title>
        <authorList>
            <person name="Suza W.P."/>
            <person name="Staswick P.E."/>
        </authorList>
    </citation>
    <scope>INDUCTION BY WOUNDING</scope>
</reference>
<protein>
    <recommendedName>
        <fullName>Probable aminotransferase TAT3</fullName>
        <ecNumber>2.6.1.-</ecNumber>
    </recommendedName>
    <alternativeName>
        <fullName>Tyrosine aminotransferase 3</fullName>
    </alternativeName>
</protein>
<sequence>MASNGVTNCNANANVWRFKGNGATSDAAAVTLRKLAFGMFKNCTMNSGKTILFPTPGEPSAHSNFRTCPEAEEAVAAAARSGMANSYAPSPGVFKARRAVAEYLNGELPTKLKAEDVYITGGCNQAIEIVIDSLAGNPSANILLPRPGYPHYDARAVYSGLEIRKYDLLPESDWEINLDGLEAAADENTVAMVIINPNNPCGNVYTYDHLNKVAEMARKLGIMIISDEVYDHVVYGDKPFIPMGKFASIAPVITLGSISKGWVNPGWRVGWIAMNDPNGIFVSTGVVQAIEDFLDLTPQPSFILQEALPDILEKTPKEFFEKKIKAMRRNVELSCERLKDIPCLFCPKKPESCSYLWLKLDTSMLNNIKNDFDFCTKLVSEESLILIPGVALGAENWVRISIGTDESVVQEIFDRLKGFYDRHAISKEAIKLSGHAINQIVVSVN</sequence>
<proteinExistence type="evidence at transcript level"/>
<keyword id="KW-0032">Aminotransferase</keyword>
<keyword id="KW-0663">Pyridoxal phosphate</keyword>
<keyword id="KW-1185">Reference proteome</keyword>
<keyword id="KW-0808">Transferase</keyword>
<evidence type="ECO:0000250" key="1"/>
<evidence type="ECO:0000269" key="2">
    <source>
    </source>
</evidence>
<evidence type="ECO:0000269" key="3">
    <source>
    </source>
</evidence>
<evidence type="ECO:0000305" key="4"/>
<comment type="cofactor">
    <cofactor evidence="1">
        <name>pyridoxal 5'-phosphate</name>
        <dbReference type="ChEBI" id="CHEBI:597326"/>
    </cofactor>
</comment>
<comment type="tissue specificity">
    <text evidence="3">Expressed in roots, leaves and cauline leaves.</text>
</comment>
<comment type="induction">
    <text evidence="2 3">By jasmonate and wounding.</text>
</comment>
<comment type="miscellaneous">
    <text>Induction by wounding requires COI1.</text>
</comment>
<comment type="similarity">
    <text evidence="4">Belongs to the class-I pyridoxal-phosphate-dependent aminotransferase family.</text>
</comment>
<feature type="chain" id="PRO_0000412727" description="Probable aminotransferase TAT3">
    <location>
        <begin position="1"/>
        <end position="445"/>
    </location>
</feature>
<feature type="sequence conflict" description="In Ref. 5; AAM62555." evidence="4" ref="5">
    <original>A</original>
    <variation>D</variation>
    <location>
        <position position="77"/>
    </location>
</feature>
<name>TAT3_ARATH</name>
<dbReference type="EC" id="2.6.1.-"/>
<dbReference type="EMBL" id="AC006585">
    <property type="protein sequence ID" value="AAD23027.1"/>
    <property type="molecule type" value="Genomic_DNA"/>
</dbReference>
<dbReference type="EMBL" id="CP002685">
    <property type="protein sequence ID" value="AEC07636.1"/>
    <property type="molecule type" value="Genomic_DNA"/>
</dbReference>
<dbReference type="EMBL" id="BT002475">
    <property type="protein sequence ID" value="AAO00835.1"/>
    <property type="molecule type" value="mRNA"/>
</dbReference>
<dbReference type="EMBL" id="BT006593">
    <property type="protein sequence ID" value="AAP31937.1"/>
    <property type="molecule type" value="mRNA"/>
</dbReference>
<dbReference type="EMBL" id="AK226395">
    <property type="protein sequence ID" value="BAE98541.1"/>
    <property type="molecule type" value="mRNA"/>
</dbReference>
<dbReference type="EMBL" id="AY085324">
    <property type="protein sequence ID" value="AAM62555.1"/>
    <property type="molecule type" value="mRNA"/>
</dbReference>
<dbReference type="PIR" id="C84641">
    <property type="entry name" value="C84641"/>
</dbReference>
<dbReference type="RefSeq" id="NP_180058.1">
    <property type="nucleotide sequence ID" value="NM_128044.3"/>
</dbReference>
<dbReference type="SMR" id="Q9SK47"/>
<dbReference type="BioGRID" id="2374">
    <property type="interactions" value="1"/>
</dbReference>
<dbReference type="FunCoup" id="Q9SK47">
    <property type="interactions" value="326"/>
</dbReference>
<dbReference type="IntAct" id="Q9SK47">
    <property type="interactions" value="1"/>
</dbReference>
<dbReference type="STRING" id="3702.Q9SK47"/>
<dbReference type="GlyGen" id="Q9SK47">
    <property type="glycosylation" value="1 site"/>
</dbReference>
<dbReference type="iPTMnet" id="Q9SK47"/>
<dbReference type="PaxDb" id="3702-AT2G24850.1"/>
<dbReference type="ProteomicsDB" id="234180"/>
<dbReference type="EnsemblPlants" id="AT2G24850.1">
    <property type="protein sequence ID" value="AT2G24850.1"/>
    <property type="gene ID" value="AT2G24850"/>
</dbReference>
<dbReference type="GeneID" id="817022"/>
<dbReference type="Gramene" id="AT2G24850.1">
    <property type="protein sequence ID" value="AT2G24850.1"/>
    <property type="gene ID" value="AT2G24850"/>
</dbReference>
<dbReference type="KEGG" id="ath:AT2G24850"/>
<dbReference type="Araport" id="AT2G24850"/>
<dbReference type="TAIR" id="AT2G24850">
    <property type="gene designation" value="TAT3"/>
</dbReference>
<dbReference type="eggNOG" id="KOG0259">
    <property type="taxonomic scope" value="Eukaryota"/>
</dbReference>
<dbReference type="HOGENOM" id="CLU_017584_4_2_1"/>
<dbReference type="InParanoid" id="Q9SK47"/>
<dbReference type="OMA" id="NDFDFCT"/>
<dbReference type="PhylomeDB" id="Q9SK47"/>
<dbReference type="BioCyc" id="ARA:AT2G24850-MONOMER"/>
<dbReference type="PRO" id="PR:Q9SK47"/>
<dbReference type="Proteomes" id="UP000006548">
    <property type="component" value="Chromosome 2"/>
</dbReference>
<dbReference type="ExpressionAtlas" id="Q9SK47">
    <property type="expression patterns" value="baseline and differential"/>
</dbReference>
<dbReference type="GO" id="GO:0004838">
    <property type="term" value="F:L-tyrosine-2-oxoglutarate transaminase activity"/>
    <property type="evidence" value="ECO:0000250"/>
    <property type="project" value="TAIR"/>
</dbReference>
<dbReference type="GO" id="GO:0030170">
    <property type="term" value="F:pyridoxal phosphate binding"/>
    <property type="evidence" value="ECO:0007669"/>
    <property type="project" value="InterPro"/>
</dbReference>
<dbReference type="GO" id="GO:0006520">
    <property type="term" value="P:amino acid metabolic process"/>
    <property type="evidence" value="ECO:0007669"/>
    <property type="project" value="InterPro"/>
</dbReference>
<dbReference type="GO" id="GO:0009058">
    <property type="term" value="P:biosynthetic process"/>
    <property type="evidence" value="ECO:0007669"/>
    <property type="project" value="InterPro"/>
</dbReference>
<dbReference type="GO" id="GO:0009753">
    <property type="term" value="P:response to jasmonic acid"/>
    <property type="evidence" value="ECO:0000270"/>
    <property type="project" value="TAIR"/>
</dbReference>
<dbReference type="GO" id="GO:0009611">
    <property type="term" value="P:response to wounding"/>
    <property type="evidence" value="ECO:0000270"/>
    <property type="project" value="TAIR"/>
</dbReference>
<dbReference type="CDD" id="cd00609">
    <property type="entry name" value="AAT_like"/>
    <property type="match status" value="1"/>
</dbReference>
<dbReference type="FunFam" id="3.40.640.10:FF:000048">
    <property type="entry name" value="tyrosine aminotransferase"/>
    <property type="match status" value="1"/>
</dbReference>
<dbReference type="Gene3D" id="3.90.1150.10">
    <property type="entry name" value="Aspartate Aminotransferase, domain 1"/>
    <property type="match status" value="1"/>
</dbReference>
<dbReference type="Gene3D" id="3.40.640.10">
    <property type="entry name" value="Type I PLP-dependent aspartate aminotransferase-like (Major domain)"/>
    <property type="match status" value="1"/>
</dbReference>
<dbReference type="InterPro" id="IPR004839">
    <property type="entry name" value="Aminotransferase_I/II_large"/>
</dbReference>
<dbReference type="InterPro" id="IPR015424">
    <property type="entry name" value="PyrdxlP-dep_Trfase"/>
</dbReference>
<dbReference type="InterPro" id="IPR015421">
    <property type="entry name" value="PyrdxlP-dep_Trfase_major"/>
</dbReference>
<dbReference type="InterPro" id="IPR015422">
    <property type="entry name" value="PyrdxlP-dep_Trfase_small"/>
</dbReference>
<dbReference type="InterPro" id="IPR005958">
    <property type="entry name" value="TyrNic_aminoTrfase"/>
</dbReference>
<dbReference type="NCBIfam" id="TIGR01265">
    <property type="entry name" value="tyr_nico_aTase"/>
    <property type="match status" value="1"/>
</dbReference>
<dbReference type="PANTHER" id="PTHR45744:SF21">
    <property type="entry name" value="AMINOTRANSFERASE TAT3-RELATED"/>
    <property type="match status" value="1"/>
</dbReference>
<dbReference type="PANTHER" id="PTHR45744">
    <property type="entry name" value="TYROSINE AMINOTRANSFERASE"/>
    <property type="match status" value="1"/>
</dbReference>
<dbReference type="Pfam" id="PF00155">
    <property type="entry name" value="Aminotran_1_2"/>
    <property type="match status" value="1"/>
</dbReference>
<dbReference type="PIRSF" id="PIRSF000517">
    <property type="entry name" value="Tyr_transaminase"/>
    <property type="match status" value="1"/>
</dbReference>
<dbReference type="SUPFAM" id="SSF53383">
    <property type="entry name" value="PLP-dependent transferases"/>
    <property type="match status" value="1"/>
</dbReference>
<gene>
    <name type="primary">TAT3</name>
    <name type="ordered locus">At2g24850</name>
    <name type="ORF">F27C12.23</name>
</gene>
<organism>
    <name type="scientific">Arabidopsis thaliana</name>
    <name type="common">Mouse-ear cress</name>
    <dbReference type="NCBI Taxonomy" id="3702"/>
    <lineage>
        <taxon>Eukaryota</taxon>
        <taxon>Viridiplantae</taxon>
        <taxon>Streptophyta</taxon>
        <taxon>Embryophyta</taxon>
        <taxon>Tracheophyta</taxon>
        <taxon>Spermatophyta</taxon>
        <taxon>Magnoliopsida</taxon>
        <taxon>eudicotyledons</taxon>
        <taxon>Gunneridae</taxon>
        <taxon>Pentapetalae</taxon>
        <taxon>rosids</taxon>
        <taxon>malvids</taxon>
        <taxon>Brassicales</taxon>
        <taxon>Brassicaceae</taxon>
        <taxon>Camelineae</taxon>
        <taxon>Arabidopsis</taxon>
    </lineage>
</organism>
<accession>Q9SK47</accession>
<accession>Q8LEN9</accession>